<protein>
    <recommendedName>
        <fullName evidence="1">Cell division protein SepF</fullName>
    </recommendedName>
</protein>
<reference key="1">
    <citation type="journal article" date="2000" name="Nucleic Acids Res.">
        <title>Complete genome sequence of the alkaliphilic bacterium Bacillus halodurans and genomic sequence comparison with Bacillus subtilis.</title>
        <authorList>
            <person name="Takami H."/>
            <person name="Nakasone K."/>
            <person name="Takaki Y."/>
            <person name="Maeno G."/>
            <person name="Sasaki R."/>
            <person name="Masui N."/>
            <person name="Fuji F."/>
            <person name="Hirama C."/>
            <person name="Nakamura Y."/>
            <person name="Ogasawara N."/>
            <person name="Kuhara S."/>
            <person name="Horikoshi K."/>
        </authorList>
    </citation>
    <scope>NUCLEOTIDE SEQUENCE [LARGE SCALE GENOMIC DNA]</scope>
    <source>
        <strain>ATCC BAA-125 / DSM 18197 / FERM 7344 / JCM 9153 / C-125</strain>
    </source>
</reference>
<proteinExistence type="inferred from homology"/>
<organism>
    <name type="scientific">Halalkalibacterium halodurans (strain ATCC BAA-125 / DSM 18197 / FERM 7344 / JCM 9153 / C-125)</name>
    <name type="common">Bacillus halodurans</name>
    <dbReference type="NCBI Taxonomy" id="272558"/>
    <lineage>
        <taxon>Bacteria</taxon>
        <taxon>Bacillati</taxon>
        <taxon>Bacillota</taxon>
        <taxon>Bacilli</taxon>
        <taxon>Bacillales</taxon>
        <taxon>Bacillaceae</taxon>
        <taxon>Halalkalibacterium (ex Joshi et al. 2022)</taxon>
    </lineage>
</organism>
<sequence>MGMKSKFKRFFELDDDASMYEEDAVSRDFVEEVEEPRRRSRTGVKQERETGQNVVSLQSVQKTAKVVLLEPRTYDEAQEIADQLKNRKAVIINLQRISHEQAKRVVDFLSGTVYAIGGDIQKLGMNIFLCTPDNVDVTGTITDMIQDGYRS</sequence>
<name>SEPF_HALH5</name>
<evidence type="ECO:0000255" key="1">
    <source>
        <dbReference type="HAMAP-Rule" id="MF_01197"/>
    </source>
</evidence>
<evidence type="ECO:0000256" key="2">
    <source>
        <dbReference type="SAM" id="MobiDB-lite"/>
    </source>
</evidence>
<evidence type="ECO:0000305" key="3"/>
<feature type="chain" id="PRO_0000333981" description="Cell division protein SepF">
    <location>
        <begin position="1"/>
        <end position="151"/>
    </location>
</feature>
<feature type="region of interest" description="Disordered" evidence="2">
    <location>
        <begin position="31"/>
        <end position="53"/>
    </location>
</feature>
<dbReference type="EMBL" id="BA000004">
    <property type="protein sequence ID" value="BAB06268.1"/>
    <property type="status" value="ALT_INIT"/>
    <property type="molecule type" value="Genomic_DNA"/>
</dbReference>
<dbReference type="PIR" id="E83968">
    <property type="entry name" value="E83968"/>
</dbReference>
<dbReference type="RefSeq" id="WP_041820665.1">
    <property type="nucleotide sequence ID" value="NC_002570.2"/>
</dbReference>
<dbReference type="SMR" id="Q9K9U6"/>
<dbReference type="STRING" id="272558.gene:10728447"/>
<dbReference type="DNASU" id="891522"/>
<dbReference type="KEGG" id="bha:BH2549"/>
<dbReference type="eggNOG" id="COG1799">
    <property type="taxonomic scope" value="Bacteria"/>
</dbReference>
<dbReference type="HOGENOM" id="CLU_078499_4_1_9"/>
<dbReference type="OrthoDB" id="9815206at2"/>
<dbReference type="Proteomes" id="UP000001258">
    <property type="component" value="Chromosome"/>
</dbReference>
<dbReference type="GO" id="GO:0005737">
    <property type="term" value="C:cytoplasm"/>
    <property type="evidence" value="ECO:0007669"/>
    <property type="project" value="UniProtKB-SubCell"/>
</dbReference>
<dbReference type="GO" id="GO:0000917">
    <property type="term" value="P:division septum assembly"/>
    <property type="evidence" value="ECO:0007669"/>
    <property type="project" value="UniProtKB-KW"/>
</dbReference>
<dbReference type="GO" id="GO:0043093">
    <property type="term" value="P:FtsZ-dependent cytokinesis"/>
    <property type="evidence" value="ECO:0007669"/>
    <property type="project" value="UniProtKB-UniRule"/>
</dbReference>
<dbReference type="Gene3D" id="3.30.110.150">
    <property type="entry name" value="SepF-like protein"/>
    <property type="match status" value="1"/>
</dbReference>
<dbReference type="HAMAP" id="MF_01197">
    <property type="entry name" value="SepF"/>
    <property type="match status" value="1"/>
</dbReference>
<dbReference type="InterPro" id="IPR023052">
    <property type="entry name" value="Cell_div_SepF"/>
</dbReference>
<dbReference type="InterPro" id="IPR007561">
    <property type="entry name" value="Cell_div_SepF/SepF-rel"/>
</dbReference>
<dbReference type="InterPro" id="IPR038594">
    <property type="entry name" value="SepF-like_sf"/>
</dbReference>
<dbReference type="PANTHER" id="PTHR35798">
    <property type="entry name" value="CELL DIVISION PROTEIN SEPF"/>
    <property type="match status" value="1"/>
</dbReference>
<dbReference type="PANTHER" id="PTHR35798:SF1">
    <property type="entry name" value="CELL DIVISION PROTEIN SEPF"/>
    <property type="match status" value="1"/>
</dbReference>
<dbReference type="Pfam" id="PF04472">
    <property type="entry name" value="SepF"/>
    <property type="match status" value="1"/>
</dbReference>
<gene>
    <name evidence="1" type="primary">sepF</name>
    <name type="ordered locus">BH2549</name>
</gene>
<keyword id="KW-0131">Cell cycle</keyword>
<keyword id="KW-0132">Cell division</keyword>
<keyword id="KW-0963">Cytoplasm</keyword>
<keyword id="KW-1185">Reference proteome</keyword>
<keyword id="KW-0717">Septation</keyword>
<comment type="function">
    <text evidence="1">Cell division protein that is part of the divisome complex and is recruited early to the Z-ring. Probably stimulates Z-ring formation, perhaps through the cross-linking of FtsZ protofilaments. Its function overlaps with FtsA.</text>
</comment>
<comment type="subunit">
    <text evidence="1">Homodimer. Interacts with FtsZ.</text>
</comment>
<comment type="subcellular location">
    <subcellularLocation>
        <location evidence="1">Cytoplasm</location>
    </subcellularLocation>
    <text evidence="1">Localizes to the division site, in a FtsZ-dependent manner.</text>
</comment>
<comment type="similarity">
    <text evidence="1">Belongs to the SepF family.</text>
</comment>
<comment type="sequence caution" evidence="3">
    <conflict type="erroneous initiation">
        <sequence resource="EMBL-CDS" id="BAB06268"/>
    </conflict>
</comment>
<accession>Q9K9U6</accession>